<keyword id="KW-0020">Allergen</keyword>
<keyword id="KW-0106">Calcium</keyword>
<keyword id="KW-0479">Metal-binding</keyword>
<keyword id="KW-0677">Repeat</keyword>
<accession>A0T2M3</accession>
<proteinExistence type="evidence at protein level"/>
<reference evidence="6" key="1">
    <citation type="journal article" date="2010" name="Biochem. Biophys. Res. Commun.">
        <title>Molecular cloning and characterization of Cup a 4, a new allergen from Cupressus arizonica.</title>
        <authorList>
            <person name="Pico de Coana Y."/>
            <person name="Parody N."/>
            <person name="Fuertes M.A."/>
            <person name="Carnes J."/>
            <person name="Roncarolo D."/>
            <person name="Ariano R."/>
            <person name="Sastre J."/>
            <person name="Mistrello G."/>
            <person name="Alonso C."/>
        </authorList>
    </citation>
    <scope>NUCLEOTIDE SEQUENCE [MRNA]</scope>
    <scope>SUBUNIT</scope>
    <scope>TISSUE SPECIFICITY</scope>
    <scope>ALLERGEN</scope>
    <scope>CIRCULAR DICHROISM ANALYSIS</scope>
    <source>
        <tissue evidence="3">Pollen</tissue>
    </source>
</reference>
<organism evidence="5">
    <name type="scientific">Hesperocyparis arizonica</name>
    <name type="common">Arizona cypress</name>
    <name type="synonym">Cupressus arizonica</name>
    <dbReference type="NCBI Taxonomy" id="49011"/>
    <lineage>
        <taxon>Eukaryota</taxon>
        <taxon>Viridiplantae</taxon>
        <taxon>Streptophyta</taxon>
        <taxon>Embryophyta</taxon>
        <taxon>Tracheophyta</taxon>
        <taxon>Spermatophyta</taxon>
        <taxon>Pinopsida</taxon>
        <taxon>Pinidae</taxon>
        <taxon>Conifers II</taxon>
        <taxon>Cupressales</taxon>
        <taxon>Cupressaceae</taxon>
        <taxon>Hesperocyparis</taxon>
    </lineage>
</organism>
<feature type="chain" id="PRO_0000447004" description="Polcalcin Cup a 4">
    <location>
        <begin position="1"/>
        <end position="165"/>
    </location>
</feature>
<feature type="domain" description="EF-hand 1" evidence="1">
    <location>
        <begin position="22"/>
        <end position="57"/>
    </location>
</feature>
<feature type="domain" description="EF-hand 2" evidence="1">
    <location>
        <begin position="58"/>
        <end position="86"/>
    </location>
</feature>
<feature type="domain" description="EF-hand 3" evidence="1">
    <location>
        <begin position="91"/>
        <end position="126"/>
    </location>
</feature>
<feature type="domain" description="EF-hand 4" evidence="1">
    <location>
        <begin position="127"/>
        <end position="162"/>
    </location>
</feature>
<feature type="binding site" evidence="1">
    <location>
        <position position="35"/>
    </location>
    <ligand>
        <name>Ca(2+)</name>
        <dbReference type="ChEBI" id="CHEBI:29108"/>
        <label>1</label>
    </ligand>
</feature>
<feature type="binding site" evidence="1">
    <location>
        <position position="37"/>
    </location>
    <ligand>
        <name>Ca(2+)</name>
        <dbReference type="ChEBI" id="CHEBI:29108"/>
        <label>1</label>
    </ligand>
</feature>
<feature type="binding site" evidence="1">
    <location>
        <position position="39"/>
    </location>
    <ligand>
        <name>Ca(2+)</name>
        <dbReference type="ChEBI" id="CHEBI:29108"/>
        <label>1</label>
    </ligand>
</feature>
<feature type="binding site" evidence="1">
    <location>
        <position position="41"/>
    </location>
    <ligand>
        <name>Ca(2+)</name>
        <dbReference type="ChEBI" id="CHEBI:29108"/>
        <label>1</label>
    </ligand>
</feature>
<feature type="binding site" evidence="1">
    <location>
        <position position="46"/>
    </location>
    <ligand>
        <name>Ca(2+)</name>
        <dbReference type="ChEBI" id="CHEBI:29108"/>
        <label>1</label>
    </ligand>
</feature>
<feature type="binding site" evidence="1">
    <location>
        <position position="71"/>
    </location>
    <ligand>
        <name>Ca(2+)</name>
        <dbReference type="ChEBI" id="CHEBI:29108"/>
        <label>2</label>
    </ligand>
</feature>
<feature type="binding site" evidence="1">
    <location>
        <position position="73"/>
    </location>
    <ligand>
        <name>Ca(2+)</name>
        <dbReference type="ChEBI" id="CHEBI:29108"/>
        <label>2</label>
    </ligand>
</feature>
<feature type="binding site" evidence="1">
    <location>
        <position position="75"/>
    </location>
    <ligand>
        <name>Ca(2+)</name>
        <dbReference type="ChEBI" id="CHEBI:29108"/>
        <label>2</label>
    </ligand>
</feature>
<feature type="binding site" evidence="1">
    <location>
        <position position="77"/>
    </location>
    <ligand>
        <name>Ca(2+)</name>
        <dbReference type="ChEBI" id="CHEBI:29108"/>
        <label>2</label>
    </ligand>
</feature>
<feature type="binding site" evidence="1">
    <location>
        <position position="82"/>
    </location>
    <ligand>
        <name>Ca(2+)</name>
        <dbReference type="ChEBI" id="CHEBI:29108"/>
        <label>2</label>
    </ligand>
</feature>
<feature type="binding site" evidence="1">
    <location>
        <position position="104"/>
    </location>
    <ligand>
        <name>Ca(2+)</name>
        <dbReference type="ChEBI" id="CHEBI:29108"/>
        <label>3</label>
    </ligand>
</feature>
<feature type="binding site" evidence="1">
    <location>
        <position position="106"/>
    </location>
    <ligand>
        <name>Ca(2+)</name>
        <dbReference type="ChEBI" id="CHEBI:29108"/>
        <label>3</label>
    </ligand>
</feature>
<feature type="binding site" evidence="1">
    <location>
        <position position="108"/>
    </location>
    <ligand>
        <name>Ca(2+)</name>
        <dbReference type="ChEBI" id="CHEBI:29108"/>
        <label>3</label>
    </ligand>
</feature>
<feature type="binding site" evidence="1">
    <location>
        <position position="110"/>
    </location>
    <ligand>
        <name>Ca(2+)</name>
        <dbReference type="ChEBI" id="CHEBI:29108"/>
        <label>3</label>
    </ligand>
</feature>
<feature type="binding site" evidence="1">
    <location>
        <position position="115"/>
    </location>
    <ligand>
        <name>Ca(2+)</name>
        <dbReference type="ChEBI" id="CHEBI:29108"/>
        <label>3</label>
    </ligand>
</feature>
<feature type="binding site" evidence="1">
    <location>
        <position position="140"/>
    </location>
    <ligand>
        <name>Ca(2+)</name>
        <dbReference type="ChEBI" id="CHEBI:29108"/>
        <label>4</label>
    </ligand>
</feature>
<feature type="binding site" evidence="1">
    <location>
        <position position="142"/>
    </location>
    <ligand>
        <name>Ca(2+)</name>
        <dbReference type="ChEBI" id="CHEBI:29108"/>
        <label>4</label>
    </ligand>
</feature>
<feature type="binding site" evidence="1">
    <location>
        <position position="144"/>
    </location>
    <ligand>
        <name>Ca(2+)</name>
        <dbReference type="ChEBI" id="CHEBI:29108"/>
        <label>4</label>
    </ligand>
</feature>
<feature type="binding site" evidence="1">
    <location>
        <position position="151"/>
    </location>
    <ligand>
        <name>Ca(2+)</name>
        <dbReference type="ChEBI" id="CHEBI:29108"/>
        <label>4</label>
    </ligand>
</feature>
<dbReference type="EMBL" id="EF079864">
    <property type="protein sequence ID" value="ABK78767.1"/>
    <property type="molecule type" value="mRNA"/>
</dbReference>
<dbReference type="EMBL" id="GU015025">
    <property type="protein sequence ID" value="ACY01951.1"/>
    <property type="molecule type" value="mRNA"/>
</dbReference>
<dbReference type="SMR" id="A0T2M3"/>
<dbReference type="Allergome" id="3552">
    <property type="allergen name" value="Cup a 4"/>
</dbReference>
<dbReference type="Allergome" id="8443">
    <property type="allergen name" value="Cup a 4.0101"/>
</dbReference>
<dbReference type="GO" id="GO:0005509">
    <property type="term" value="F:calcium ion binding"/>
    <property type="evidence" value="ECO:0007669"/>
    <property type="project" value="InterPro"/>
</dbReference>
<dbReference type="GO" id="GO:0042803">
    <property type="term" value="F:protein homodimerization activity"/>
    <property type="evidence" value="ECO:0000314"/>
    <property type="project" value="UniProtKB"/>
</dbReference>
<dbReference type="CDD" id="cd00051">
    <property type="entry name" value="EFh"/>
    <property type="match status" value="2"/>
</dbReference>
<dbReference type="FunFam" id="1.10.238.10:FF:000089">
    <property type="entry name" value="calmodulin-like protein 3"/>
    <property type="match status" value="1"/>
</dbReference>
<dbReference type="FunFam" id="1.10.238.10:FF:000336">
    <property type="entry name" value="HLH domain-containing protein"/>
    <property type="match status" value="1"/>
</dbReference>
<dbReference type="Gene3D" id="1.10.238.10">
    <property type="entry name" value="EF-hand"/>
    <property type="match status" value="2"/>
</dbReference>
<dbReference type="InterPro" id="IPR011992">
    <property type="entry name" value="EF-hand-dom_pair"/>
</dbReference>
<dbReference type="InterPro" id="IPR018247">
    <property type="entry name" value="EF_Hand_1_Ca_BS"/>
</dbReference>
<dbReference type="InterPro" id="IPR002048">
    <property type="entry name" value="EF_hand_dom"/>
</dbReference>
<dbReference type="InterPro" id="IPR039647">
    <property type="entry name" value="EF_hand_pair_protein_CML-like"/>
</dbReference>
<dbReference type="PANTHER" id="PTHR10891">
    <property type="entry name" value="EF-HAND CALCIUM-BINDING DOMAIN CONTAINING PROTEIN"/>
    <property type="match status" value="1"/>
</dbReference>
<dbReference type="Pfam" id="PF13499">
    <property type="entry name" value="EF-hand_7"/>
    <property type="match status" value="2"/>
</dbReference>
<dbReference type="SMART" id="SM00054">
    <property type="entry name" value="EFh"/>
    <property type="match status" value="4"/>
</dbReference>
<dbReference type="SUPFAM" id="SSF47473">
    <property type="entry name" value="EF-hand"/>
    <property type="match status" value="1"/>
</dbReference>
<dbReference type="PROSITE" id="PS00018">
    <property type="entry name" value="EF_HAND_1"/>
    <property type="match status" value="4"/>
</dbReference>
<dbReference type="PROSITE" id="PS50222">
    <property type="entry name" value="EF_HAND_2"/>
    <property type="match status" value="4"/>
</dbReference>
<evidence type="ECO:0000255" key="1">
    <source>
        <dbReference type="PROSITE-ProRule" id="PRU00448"/>
    </source>
</evidence>
<evidence type="ECO:0000269" key="2">
    <source>
    </source>
</evidence>
<evidence type="ECO:0000303" key="3">
    <source>
    </source>
</evidence>
<evidence type="ECO:0000305" key="4"/>
<evidence type="ECO:0000312" key="5">
    <source>
        <dbReference type="EMBL" id="ABK78767.1"/>
    </source>
</evidence>
<evidence type="ECO:0000312" key="6">
    <source>
        <dbReference type="EMBL" id="ACY01951.1"/>
    </source>
</evidence>
<sequence length="165" mass="18038">MDEVPSSDESKSASSGKRVLEQSVHELEEVFKKFDANGDGKISGSELADILRSMGSEVDEAEVKAMMEEADTDGDGYVSLQEFVDLNIKGATVKDLKNAFKVFDRDCNGTISPAELCETLKSVGEPCTIEESKNIIHNVDKNGDGLINVEEFQTMMTSEMTDKSK</sequence>
<protein>
    <recommendedName>
        <fullName evidence="4">Polcalcin Cup a 4</fullName>
    </recommendedName>
    <alternativeName>
        <fullName evidence="4">Calcium-binding pollen allergen Cup a 4</fullName>
    </alternativeName>
    <allergenName evidence="3">Cup a 4</allergenName>
</protein>
<name>POLC4_HESAR</name>
<comment type="subunit">
    <text evidence="2">May exist as monomer and dimer.</text>
</comment>
<comment type="tissue specificity">
    <text evidence="2">Expressed in mature pollen grains.</text>
</comment>
<comment type="allergen">
    <text evidence="2">Causes an allergic reaction in human. Binds to IgE in 9.6% of 177 patients allergic to Arizona cypress pollen.</text>
</comment>